<keyword id="KW-0002">3D-structure</keyword>
<keyword id="KW-0053">Apoptosis</keyword>
<keyword id="KW-0160">Chromosomal rearrangement</keyword>
<keyword id="KW-0963">Cytoplasm</keyword>
<keyword id="KW-0479">Metal-binding</keyword>
<keyword id="KW-0539">Nucleus</keyword>
<keyword id="KW-1267">Proteomics identification</keyword>
<keyword id="KW-1185">Reference proteome</keyword>
<keyword id="KW-0677">Repeat</keyword>
<keyword id="KW-0808">Transferase</keyword>
<keyword id="KW-0832">Ubl conjugation</keyword>
<keyword id="KW-0833">Ubl conjugation pathway</keyword>
<keyword id="KW-0862">Zinc</keyword>
<keyword id="KW-0863">Zinc-finger</keyword>
<name>BIRC3_HUMAN</name>
<accession>Q13489</accession>
<accession>Q16628</accession>
<accession>Q9HC27</accession>
<accession>Q9UP46</accession>
<proteinExistence type="evidence at protein level"/>
<reference key="1">
    <citation type="journal article" date="1995" name="Cell">
        <title>The TNFR2-TRAF signaling complex contains two novel proteins related to baculoviral inhibitor of apoptosis proteins.</title>
        <authorList>
            <person name="Rothe M."/>
            <person name="Pan M.-G."/>
            <person name="Henzel W.J."/>
            <person name="Ayres T.M."/>
            <person name="Goeddel D.V."/>
        </authorList>
    </citation>
    <scope>NUCLEOTIDE SEQUENCE [MRNA]</scope>
</reference>
<reference key="2">
    <citation type="journal article" date="1996" name="Nature">
        <title>Suppression of apoptosis in mammalian cells by NAIP and a related family of IAP genes.</title>
        <authorList>
            <person name="Liston P."/>
            <person name="Roy N."/>
            <person name="Tamai K."/>
            <person name="Lefebvre C."/>
            <person name="Baird S."/>
            <person name="Cherton-Horvat G."/>
            <person name="Farahani R."/>
            <person name="McLean M."/>
            <person name="Ikeda J."/>
            <person name="Mackenzie A."/>
            <person name="Korneluk R.G."/>
        </authorList>
    </citation>
    <scope>NUCLEOTIDE SEQUENCE [MRNA]</scope>
    <source>
        <tissue>Liver</tissue>
    </source>
</reference>
<reference key="3">
    <citation type="journal article" date="1996" name="Proc. Natl. Acad. Sci. U.S.A.">
        <title>Cloning and expression of apoptosis inhibitory protein homologs that function to inhibit apoptosis and/or bind tumor necrosis factor receptor-associated factors.</title>
        <authorList>
            <person name="Uren A.G."/>
            <person name="Pakusch M."/>
            <person name="Hawkins C.J."/>
            <person name="Puls K.L."/>
            <person name="Vaux D.L."/>
        </authorList>
    </citation>
    <scope>NUCLEOTIDE SEQUENCE [MRNA]</scope>
    <source>
        <tissue>Fetal liver</tissue>
    </source>
</reference>
<reference key="4">
    <citation type="journal article" date="1999" name="Blood">
        <title>Vascular endothelial genes that are responsive to tumor necrosis factor-alpha in vitro are expressed in atherosclerotic lesions, including inhibitor of apoptosis protein-1, stannin, and two novel genes.</title>
        <authorList>
            <person name="Horrevoets A.J.G."/>
            <person name="Fontijn R.D."/>
            <person name="van Zonneveld A.J."/>
            <person name="de Vries C.J.M."/>
            <person name="ten Cate J.W."/>
            <person name="Pannekoek H."/>
        </authorList>
    </citation>
    <scope>NUCLEOTIDE SEQUENCE [MRNA]</scope>
</reference>
<reference key="5">
    <citation type="submission" date="2004-09" db="EMBL/GenBank/DDBJ databases">
        <authorList>
            <consortium name="NIEHS SNPs program"/>
        </authorList>
    </citation>
    <scope>NUCLEOTIDE SEQUENCE [GENOMIC DNA]</scope>
    <scope>VARIANTS ARG-260 AND LYS-401</scope>
</reference>
<reference key="6">
    <citation type="journal article" date="2004" name="Genome Res.">
        <title>The status, quality, and expansion of the NIH full-length cDNA project: the Mammalian Gene Collection (MGC).</title>
        <authorList>
            <consortium name="The MGC Project Team"/>
        </authorList>
    </citation>
    <scope>NUCLEOTIDE SEQUENCE [LARGE SCALE MRNA]</scope>
    <source>
        <tissue>Lymph</tissue>
    </source>
</reference>
<reference key="7">
    <citation type="journal article" date="2000" name="Genes Chromosomes Cancer">
        <title>Structure of the MLT gene and molecular characterization of the genomic breakpoint junctions in the t(11;18)(q21;q21) of marginal zone B-cell lymphomas of MALT type.</title>
        <authorList>
            <person name="Baens M."/>
            <person name="Steyls A."/>
            <person name="Dierlamm J."/>
            <person name="De Wolf-Peeters C."/>
            <person name="Marynen P."/>
        </authorList>
    </citation>
    <scope>NUCLEOTIDE SEQUENCE [GENOMIC DNA] OF 362-441</scope>
</reference>
<reference key="8">
    <citation type="journal article" date="2005" name="Cancer Res.">
        <title>cIAP1 Localizes to the nuclear compartment and modulates the cell cycle.</title>
        <authorList>
            <person name="Samuel T."/>
            <person name="Okada K."/>
            <person name="Hyer M."/>
            <person name="Welsh K."/>
            <person name="Zapata J.M."/>
            <person name="Reed J.C."/>
        </authorList>
    </citation>
    <scope>SUBCELLULAR LOCATION</scope>
</reference>
<reference key="9">
    <citation type="journal article" date="2008" name="Cell Cycle">
        <title>IAPs: more than just inhibitors of apoptosis proteins.</title>
        <authorList>
            <person name="Dubrez-Daloz L."/>
            <person name="Dupoux A."/>
            <person name="Cartier J."/>
        </authorList>
    </citation>
    <scope>REVIEW ON FUNCTION</scope>
</reference>
<reference key="10">
    <citation type="journal article" date="2010" name="Curr. Opin. Cell Biol.">
        <title>To fight or die - inhibitor of apoptosis proteins at the crossroad of innate immunity and death.</title>
        <authorList>
            <person name="Lopez J."/>
            <person name="Meier P."/>
        </authorList>
    </citation>
    <scope>REVIEW ON FUNCTION</scope>
</reference>
<reference key="11">
    <citation type="journal article" date="2010" name="Nat. Rev. Cancer">
        <title>IAPs: from caspase inhibitors to modulators of NF-kappaB, inflammation and cancer.</title>
        <authorList>
            <person name="Gyrd-Hansen M."/>
            <person name="Meier P."/>
        </authorList>
    </citation>
    <scope>REVIEW ON FUNCTION</scope>
</reference>
<reference key="12">
    <citation type="journal article" date="2011" name="Discov. Med.">
        <title>Inhibitor of apoptosis (IAP) proteins in regulation of inflammation and innate immunity.</title>
        <authorList>
            <person name="Damgaard R.B."/>
            <person name="Gyrd-Hansen M."/>
        </authorList>
    </citation>
    <scope>REVIEW ON FUNCTION</scope>
</reference>
<reference key="13">
    <citation type="journal article" date="2011" name="J. Biol. Chem.">
        <title>The USP19 deubiquitinase regulates the stability of c-IAP1 and c-IAP2.</title>
        <authorList>
            <person name="Mei Y."/>
            <person name="Hahn A.A."/>
            <person name="Hu S."/>
            <person name="Yang X."/>
        </authorList>
    </citation>
    <scope>ACTIVITY REGULATION</scope>
    <scope>INTERACTION WITH USP19</scope>
</reference>
<reference key="14">
    <citation type="journal article" date="2011" name="PLoS ONE">
        <title>cIAP1/2 are direct E3 ligases conjugating diverse types of ubiquitin chains to receptor interacting proteins kinases 1 to 4 (RIP1-4).</title>
        <authorList>
            <person name="Bertrand M.J."/>
            <person name="Lippens S."/>
            <person name="Staes A."/>
            <person name="Gilbert B."/>
            <person name="Roelandt R."/>
            <person name="De Medts J."/>
            <person name="Gevaert K."/>
            <person name="Declercq W."/>
            <person name="Vandenabeele P."/>
        </authorList>
    </citation>
    <scope>FUNCTION IN THE UBIQUITINATION OF RIPK1; RIPK2; RIPK3 AND RIPK4</scope>
    <scope>INTERACTION WITH RIPK1; RIPK2; RIPK3 AND RIPK4</scope>
    <scope>CATALYTIC ACTIVITY</scope>
</reference>
<reference key="15">
    <citation type="journal article" date="2012" name="Cell Death Differ.">
        <title>IAPs: guardians of RIPK1.</title>
        <authorList>
            <person name="Darding M."/>
            <person name="Meier P."/>
        </authorList>
    </citation>
    <scope>REVIEW ON FUNCTION</scope>
</reference>
<reference key="16">
    <citation type="journal article" date="2013" name="Cell Rep.">
        <title>IKKepsilon-mediated tumorigenesis requires K63-linked polyubiquitination by a cIAP1/cIAP2/TRAF2 E3 ubiquitin ligase complex.</title>
        <authorList>
            <person name="Zhou A.Y."/>
            <person name="Shen R.R."/>
            <person name="Kim E."/>
            <person name="Lock Y.J."/>
            <person name="Xu M."/>
            <person name="Chen Z.J."/>
            <person name="Hahn W.C."/>
        </authorList>
    </citation>
    <scope>FUNCTION IN IKBKE UBIQUITINATION</scope>
    <scope>CATALYTIC ACTIVITY</scope>
</reference>
<gene>
    <name type="primary">BIRC3</name>
    <name type="synonym">API2</name>
    <name type="synonym">MIHC</name>
    <name type="synonym">RNF49</name>
</gene>
<organism>
    <name type="scientific">Homo sapiens</name>
    <name type="common">Human</name>
    <dbReference type="NCBI Taxonomy" id="9606"/>
    <lineage>
        <taxon>Eukaryota</taxon>
        <taxon>Metazoa</taxon>
        <taxon>Chordata</taxon>
        <taxon>Craniata</taxon>
        <taxon>Vertebrata</taxon>
        <taxon>Euteleostomi</taxon>
        <taxon>Mammalia</taxon>
        <taxon>Eutheria</taxon>
        <taxon>Euarchontoglires</taxon>
        <taxon>Primates</taxon>
        <taxon>Haplorrhini</taxon>
        <taxon>Catarrhini</taxon>
        <taxon>Hominidae</taxon>
        <taxon>Homo</taxon>
    </lineage>
</organism>
<protein>
    <recommendedName>
        <fullName>Baculoviral IAP repeat-containing protein 3</fullName>
        <ecNumber evidence="6 7">2.3.2.27</ecNumber>
    </recommendedName>
    <alternativeName>
        <fullName>Apoptosis inhibitor 2</fullName>
        <shortName>API2</shortName>
    </alternativeName>
    <alternativeName>
        <fullName>Cellular inhibitor of apoptosis 2</fullName>
        <shortName evidence="9">C-IAP2</shortName>
    </alternativeName>
    <alternativeName>
        <fullName>IAP homolog C</fullName>
    </alternativeName>
    <alternativeName>
        <fullName>Inhibitor of apoptosis protein 1</fullName>
        <shortName>hIAP-1</shortName>
        <shortName>hIAP1</shortName>
    </alternativeName>
    <alternativeName>
        <fullName>RING finger protein 49</fullName>
    </alternativeName>
    <alternativeName>
        <fullName evidence="10">RING-type E3 ubiquitin transferase BIRC3</fullName>
    </alternativeName>
    <alternativeName>
        <fullName>TNFR2-TRAF-signaling complex protein 1</fullName>
    </alternativeName>
</protein>
<evidence type="ECO:0000255" key="1">
    <source>
        <dbReference type="PROSITE-ProRule" id="PRU00029"/>
    </source>
</evidence>
<evidence type="ECO:0000255" key="2">
    <source>
        <dbReference type="PROSITE-ProRule" id="PRU00046"/>
    </source>
</evidence>
<evidence type="ECO:0000255" key="3">
    <source>
        <dbReference type="PROSITE-ProRule" id="PRU00175"/>
    </source>
</evidence>
<evidence type="ECO:0000269" key="4">
    <source>
    </source>
</evidence>
<evidence type="ECO:0000269" key="5">
    <source>
    </source>
</evidence>
<evidence type="ECO:0000269" key="6">
    <source>
    </source>
</evidence>
<evidence type="ECO:0000269" key="7">
    <source>
    </source>
</evidence>
<evidence type="ECO:0000269" key="8">
    <source ref="5"/>
</evidence>
<evidence type="ECO:0000303" key="9">
    <source>
    </source>
</evidence>
<evidence type="ECO:0000305" key="10"/>
<evidence type="ECO:0007829" key="11">
    <source>
        <dbReference type="PDB" id="2UVL"/>
    </source>
</evidence>
<evidence type="ECO:0007829" key="12">
    <source>
        <dbReference type="PDB" id="3EB5"/>
    </source>
</evidence>
<evidence type="ECO:0007829" key="13">
    <source>
        <dbReference type="PDB" id="3M0A"/>
    </source>
</evidence>
<sequence>MNIVENSIFLSNLMKSANTFELKYDLSCELYRMSTYSTFPAGVPVSERSLARAGFYYTGVNDKVKCFCCGLMLDNWKRGDSPTEKHKKLYPSCRFVQSLNSVNNLEATSQPTFPSSVTNSTHSLLPGTENSGYFRGSYSNSPSNPVNSRANQDFSALMRSSYHCAMNNENARLLTFQTWPLTFLSPTDLAKAGFYYIGPGDRVACFACGGKLSNWEPKDNAMSEHLRHFPKCPFIENQLQDTSRYTVSNLSMQTHAARFKTFFNWPSSVLVNPEQLASAGFYYVGNSDDVKCFCCDGGLRCWESGDDPWVQHAKWFPRCEYLIRIKGQEFIRQVQASYPHLLEQLLSTSDSPGDENAESSIIHFEPGEDHSEDAIMMNTPVINAAVEMGFSRSLVKQTVQRKILATGENYRLVNDLVLDLLNAEDEIREEERERATEEKESNDLLLIRKNRMALFQHLTCVIPILDSLLTAGIINEQEHDVIKQKTQTSLQARELIDTILVKGNIAATVFRNSLQEAEAVLYEHLFVQQDIKYIPTEDVSDLPVEEQLRRLQEERTCKVCMDKEVSIVFIPCGHLVVCKDCAPSLRKCPICRSTIKGTVRTFLS</sequence>
<feature type="chain" id="PRO_0000122349" description="Baculoviral IAP repeat-containing protein 3">
    <location>
        <begin position="1"/>
        <end position="604"/>
    </location>
</feature>
<feature type="repeat" description="BIR 1">
    <location>
        <begin position="29"/>
        <end position="96"/>
    </location>
</feature>
<feature type="repeat" description="BIR 2">
    <location>
        <begin position="169"/>
        <end position="235"/>
    </location>
</feature>
<feature type="repeat" description="BIR 3">
    <location>
        <begin position="255"/>
        <end position="322"/>
    </location>
</feature>
<feature type="domain" description="CARD" evidence="2">
    <location>
        <begin position="439"/>
        <end position="529"/>
    </location>
</feature>
<feature type="zinc finger region" description="RING-type" evidence="3">
    <location>
        <begin position="557"/>
        <end position="592"/>
    </location>
</feature>
<feature type="binding site" evidence="1">
    <location>
        <position position="292"/>
    </location>
    <ligand>
        <name>Zn(2+)</name>
        <dbReference type="ChEBI" id="CHEBI:29105"/>
    </ligand>
</feature>
<feature type="binding site" evidence="1">
    <location>
        <position position="295"/>
    </location>
    <ligand>
        <name>Zn(2+)</name>
        <dbReference type="ChEBI" id="CHEBI:29105"/>
    </ligand>
</feature>
<feature type="binding site" evidence="1">
    <location>
        <position position="312"/>
    </location>
    <ligand>
        <name>Zn(2+)</name>
        <dbReference type="ChEBI" id="CHEBI:29105"/>
    </ligand>
</feature>
<feature type="binding site" evidence="1">
    <location>
        <position position="319"/>
    </location>
    <ligand>
        <name>Zn(2+)</name>
        <dbReference type="ChEBI" id="CHEBI:29105"/>
    </ligand>
</feature>
<feature type="site" description="Breakpoint for translocation to form BIRC3-MALT1">
    <location>
        <begin position="442"/>
        <end position="443"/>
    </location>
</feature>
<feature type="sequence variant" id="VAR_021069" description="In dbSNP:rs2276113." evidence="8">
    <original>K</original>
    <variation>R</variation>
    <location>
        <position position="260"/>
    </location>
</feature>
<feature type="sequence variant" id="VAR_049536" description="In dbSNP:rs12222256.">
    <original>V</original>
    <variation>M</variation>
    <location>
        <position position="386"/>
    </location>
</feature>
<feature type="sequence variant" id="VAR_021070" description="In dbSNP:rs17881197." evidence="8">
    <original>R</original>
    <variation>K</variation>
    <location>
        <position position="401"/>
    </location>
</feature>
<feature type="sequence conflict" description="In Ref. 4; AAC83232." evidence="10" ref="4">
    <original>N</original>
    <variation>Y</variation>
    <location>
        <position position="18"/>
    </location>
</feature>
<feature type="sequence conflict" description="In Ref. 2; AAC50371." evidence="10" ref="2">
    <original>N</original>
    <variation>H</variation>
    <location>
        <position position="119"/>
    </location>
</feature>
<feature type="sequence conflict" description="In Ref. 2; AAC50371." evidence="10" ref="2">
    <original>D</original>
    <variation>E</variation>
    <location>
        <position position="153"/>
    </location>
</feature>
<feature type="sequence conflict" description="In Ref. 2; AAC50371." evidence="10" ref="2">
    <original>H</original>
    <variation>P</variation>
    <location>
        <position position="163"/>
    </location>
</feature>
<feature type="sequence conflict" description="In Ref. 2; AAC50371." evidence="10" ref="2">
    <original>A</original>
    <variation>P</variation>
    <location>
        <position position="165"/>
    </location>
</feature>
<feature type="sequence conflict" description="In Ref. 2; AAC50371." evidence="10" ref="2">
    <original>K</original>
    <variation>R</variation>
    <location>
        <position position="191"/>
    </location>
</feature>
<feature type="sequence conflict" description="In Ref. 2; AAC50371." evidence="10" ref="2">
    <original>F</original>
    <variation>L</variation>
    <location>
        <position position="364"/>
    </location>
</feature>
<feature type="sequence conflict" description="In Ref. 2; AAC50371." evidence="10" ref="2">
    <original>Q</original>
    <variation>P</variation>
    <location>
        <position position="552"/>
    </location>
</feature>
<feature type="helix" evidence="13">
    <location>
        <begin position="28"/>
        <end position="34"/>
    </location>
</feature>
<feature type="helix" evidence="13">
    <location>
        <begin position="35"/>
        <end position="38"/>
    </location>
</feature>
<feature type="helix" evidence="13">
    <location>
        <begin position="47"/>
        <end position="52"/>
    </location>
</feature>
<feature type="strand" evidence="13">
    <location>
        <begin position="55"/>
        <end position="57"/>
    </location>
</feature>
<feature type="strand" evidence="13">
    <location>
        <begin position="64"/>
        <end position="66"/>
    </location>
</feature>
<feature type="turn" evidence="13">
    <location>
        <begin position="67"/>
        <end position="69"/>
    </location>
</feature>
<feature type="helix" evidence="13">
    <location>
        <begin position="82"/>
        <end position="89"/>
    </location>
</feature>
<feature type="turn" evidence="13">
    <location>
        <begin position="94"/>
        <end position="97"/>
    </location>
</feature>
<feature type="helix" evidence="11">
    <location>
        <begin position="250"/>
        <end position="252"/>
    </location>
</feature>
<feature type="helix" evidence="11">
    <location>
        <begin position="255"/>
        <end position="260"/>
    </location>
</feature>
<feature type="helix" evidence="11">
    <location>
        <begin position="261"/>
        <end position="264"/>
    </location>
</feature>
<feature type="helix" evidence="11">
    <location>
        <begin position="273"/>
        <end position="278"/>
    </location>
</feature>
<feature type="strand" evidence="11">
    <location>
        <begin position="281"/>
        <end position="285"/>
    </location>
</feature>
<feature type="turn" evidence="11">
    <location>
        <begin position="286"/>
        <end position="288"/>
    </location>
</feature>
<feature type="strand" evidence="11">
    <location>
        <begin position="289"/>
        <end position="292"/>
    </location>
</feature>
<feature type="turn" evidence="11">
    <location>
        <begin position="293"/>
        <end position="295"/>
    </location>
</feature>
<feature type="strand" evidence="11">
    <location>
        <begin position="298"/>
        <end position="301"/>
    </location>
</feature>
<feature type="helix" evidence="11">
    <location>
        <begin position="308"/>
        <end position="315"/>
    </location>
</feature>
<feature type="helix" evidence="11">
    <location>
        <begin position="320"/>
        <end position="334"/>
    </location>
</feature>
<feature type="helix" evidence="12">
    <location>
        <begin position="544"/>
        <end position="555"/>
    </location>
</feature>
<feature type="turn" evidence="12">
    <location>
        <begin position="558"/>
        <end position="560"/>
    </location>
</feature>
<feature type="strand" evidence="12">
    <location>
        <begin position="561"/>
        <end position="564"/>
    </location>
</feature>
<feature type="strand" evidence="12">
    <location>
        <begin position="567"/>
        <end position="570"/>
    </location>
</feature>
<feature type="strand" evidence="12">
    <location>
        <begin position="575"/>
        <end position="577"/>
    </location>
</feature>
<feature type="turn" evidence="12">
    <location>
        <begin position="579"/>
        <end position="581"/>
    </location>
</feature>
<feature type="helix" evidence="12">
    <location>
        <begin position="582"/>
        <end position="584"/>
    </location>
</feature>
<feature type="strand" evidence="12">
    <location>
        <begin position="589"/>
        <end position="591"/>
    </location>
</feature>
<feature type="strand" evidence="12">
    <location>
        <begin position="597"/>
        <end position="600"/>
    </location>
</feature>
<dbReference type="EC" id="2.3.2.27" evidence="6 7"/>
<dbReference type="EMBL" id="L49432">
    <property type="protein sequence ID" value="AAC41943.1"/>
    <property type="molecule type" value="mRNA"/>
</dbReference>
<dbReference type="EMBL" id="U45878">
    <property type="protein sequence ID" value="AAC50371.1"/>
    <property type="molecule type" value="mRNA"/>
</dbReference>
<dbReference type="EMBL" id="U37546">
    <property type="protein sequence ID" value="AAC50507.1"/>
    <property type="molecule type" value="mRNA"/>
</dbReference>
<dbReference type="EMBL" id="AF070674">
    <property type="protein sequence ID" value="AAC83232.1"/>
    <property type="molecule type" value="mRNA"/>
</dbReference>
<dbReference type="EMBL" id="AY764389">
    <property type="protein sequence ID" value="AAU88144.1"/>
    <property type="molecule type" value="Genomic_DNA"/>
</dbReference>
<dbReference type="EMBL" id="BC037420">
    <property type="protein sequence ID" value="AAH37420.1"/>
    <property type="molecule type" value="mRNA"/>
</dbReference>
<dbReference type="EMBL" id="AF178945">
    <property type="protein sequence ID" value="AAG09369.1"/>
    <property type="molecule type" value="Genomic_DNA"/>
</dbReference>
<dbReference type="CCDS" id="CCDS8315.1"/>
<dbReference type="PIR" id="S68449">
    <property type="entry name" value="S68449"/>
</dbReference>
<dbReference type="RefSeq" id="NP_001156.1">
    <property type="nucleotide sequence ID" value="NM_001165.5"/>
</dbReference>
<dbReference type="RefSeq" id="NP_892007.1">
    <property type="nucleotide sequence ID" value="NM_182962.3"/>
</dbReference>
<dbReference type="RefSeq" id="XP_016873132.1">
    <property type="nucleotide sequence ID" value="XM_017017643.1"/>
</dbReference>
<dbReference type="RefSeq" id="XP_054224588.1">
    <property type="nucleotide sequence ID" value="XM_054368613.1"/>
</dbReference>
<dbReference type="PDB" id="2UVL">
    <property type="method" value="X-ray"/>
    <property type="resolution" value="1.91 A"/>
    <property type="chains" value="A/B=244-337"/>
</dbReference>
<dbReference type="PDB" id="3EB5">
    <property type="method" value="X-ray"/>
    <property type="resolution" value="2.00 A"/>
    <property type="chains" value="A=536-604"/>
</dbReference>
<dbReference type="PDB" id="3EB6">
    <property type="method" value="X-ray"/>
    <property type="resolution" value="3.40 A"/>
    <property type="chains" value="A=536-604"/>
</dbReference>
<dbReference type="PDB" id="3M0A">
    <property type="method" value="X-ray"/>
    <property type="resolution" value="2.61 A"/>
    <property type="chains" value="D=26-99"/>
</dbReference>
<dbReference type="PDB" id="3M0D">
    <property type="method" value="X-ray"/>
    <property type="resolution" value="2.80 A"/>
    <property type="chains" value="D=26-99"/>
</dbReference>
<dbReference type="PDB" id="7NK0">
    <property type="method" value="X-ray"/>
    <property type="resolution" value="3.30 A"/>
    <property type="chains" value="D/E=26-102"/>
</dbReference>
<dbReference type="PDBsum" id="2UVL"/>
<dbReference type="PDBsum" id="3EB5"/>
<dbReference type="PDBsum" id="3EB6"/>
<dbReference type="PDBsum" id="3M0A"/>
<dbReference type="PDBsum" id="3M0D"/>
<dbReference type="PDBsum" id="7NK0"/>
<dbReference type="SMR" id="Q13489"/>
<dbReference type="BioGRID" id="106827">
    <property type="interactions" value="1322"/>
</dbReference>
<dbReference type="ComplexPortal" id="CPX-25723">
    <property type="entry name" value="sTNF-TNR1A receptor-ligand core complex, BIRC3 variant"/>
</dbReference>
<dbReference type="ComplexPortal" id="CPX-25726">
    <property type="entry name" value="mTNF-TNR1A receptor-ligand core complex, BIRC3 variant"/>
</dbReference>
<dbReference type="ComplexPortal" id="CPX-25727">
    <property type="entry name" value="mTNF-TNR1B receptor-ligand core complex, BIRC3 variant"/>
</dbReference>
<dbReference type="CORUM" id="Q13489"/>
<dbReference type="DIP" id="DIP-33720N"/>
<dbReference type="FunCoup" id="Q13489">
    <property type="interactions" value="3623"/>
</dbReference>
<dbReference type="IntAct" id="Q13489">
    <property type="interactions" value="43"/>
</dbReference>
<dbReference type="MINT" id="Q13489"/>
<dbReference type="STRING" id="9606.ENSP00000263464"/>
<dbReference type="BindingDB" id="Q13489"/>
<dbReference type="ChEMBL" id="CHEMBL5335"/>
<dbReference type="DrugBank" id="DB16095">
    <property type="generic name" value="APG-1387"/>
</dbReference>
<dbReference type="DrugBank" id="DB12085">
    <property type="generic name" value="LCL-161"/>
</dbReference>
<dbReference type="DrugBank" id="DB16305">
    <property type="generic name" value="Xevinapant"/>
</dbReference>
<dbReference type="GuidetoPHARMACOLOGY" id="2792"/>
<dbReference type="MEROPS" id="I32.003"/>
<dbReference type="MEROPS" id="I32.007"/>
<dbReference type="iPTMnet" id="Q13489"/>
<dbReference type="PhosphoSitePlus" id="Q13489"/>
<dbReference type="BioMuta" id="BIRC3"/>
<dbReference type="DMDM" id="2497236"/>
<dbReference type="jPOST" id="Q13489"/>
<dbReference type="MassIVE" id="Q13489"/>
<dbReference type="PaxDb" id="9606-ENSP00000263464"/>
<dbReference type="PeptideAtlas" id="Q13489"/>
<dbReference type="ProteomicsDB" id="59483"/>
<dbReference type="Pumba" id="Q13489"/>
<dbReference type="Antibodypedia" id="1035">
    <property type="antibodies" value="714 antibodies from 41 providers"/>
</dbReference>
<dbReference type="DNASU" id="330"/>
<dbReference type="Ensembl" id="ENST00000263464.9">
    <property type="protein sequence ID" value="ENSP00000263464.4"/>
    <property type="gene ID" value="ENSG00000023445.17"/>
</dbReference>
<dbReference type="Ensembl" id="ENST00000526421.6">
    <property type="protein sequence ID" value="ENSP00000501119.1"/>
    <property type="gene ID" value="ENSG00000023445.17"/>
</dbReference>
<dbReference type="Ensembl" id="ENST00000532808.5">
    <property type="protein sequence ID" value="ENSP00000432907.1"/>
    <property type="gene ID" value="ENSG00000023445.17"/>
</dbReference>
<dbReference type="GeneID" id="330"/>
<dbReference type="KEGG" id="hsa:330"/>
<dbReference type="MANE-Select" id="ENST00000263464.9">
    <property type="protein sequence ID" value="ENSP00000263464.4"/>
    <property type="RefSeq nucleotide sequence ID" value="NM_001165.5"/>
    <property type="RefSeq protein sequence ID" value="NP_001156.1"/>
</dbReference>
<dbReference type="UCSC" id="uc001pgx.5">
    <property type="organism name" value="human"/>
</dbReference>
<dbReference type="AGR" id="HGNC:591"/>
<dbReference type="CTD" id="330"/>
<dbReference type="DisGeNET" id="330"/>
<dbReference type="GeneCards" id="BIRC3"/>
<dbReference type="HGNC" id="HGNC:591">
    <property type="gene designation" value="BIRC3"/>
</dbReference>
<dbReference type="HPA" id="ENSG00000023445">
    <property type="expression patterns" value="Tissue enhanced (intestine, lymphoid tissue)"/>
</dbReference>
<dbReference type="MalaCards" id="BIRC3"/>
<dbReference type="MIM" id="601721">
    <property type="type" value="gene"/>
</dbReference>
<dbReference type="neXtProt" id="NX_Q13489"/>
<dbReference type="OpenTargets" id="ENSG00000023445"/>
<dbReference type="Orphanet" id="52417">
    <property type="disease" value="MALT lymphoma"/>
</dbReference>
<dbReference type="PharmGKB" id="PA25360"/>
<dbReference type="VEuPathDB" id="HostDB:ENSG00000023445"/>
<dbReference type="eggNOG" id="KOG1101">
    <property type="taxonomic scope" value="Eukaryota"/>
</dbReference>
<dbReference type="GeneTree" id="ENSGT00940000154175"/>
<dbReference type="HOGENOM" id="CLU_016347_1_1_1"/>
<dbReference type="InParanoid" id="Q13489"/>
<dbReference type="OrthoDB" id="4034597at2759"/>
<dbReference type="PAN-GO" id="Q13489">
    <property type="GO annotations" value="8 GO annotations based on evolutionary models"/>
</dbReference>
<dbReference type="PhylomeDB" id="Q13489"/>
<dbReference type="TreeFam" id="TF105356"/>
<dbReference type="BRENDA" id="2.3.2.27">
    <property type="organism ID" value="2681"/>
</dbReference>
<dbReference type="PathwayCommons" id="Q13489"/>
<dbReference type="Reactome" id="R-HSA-168638">
    <property type="pathway name" value="NOD1/2 Signaling Pathway"/>
</dbReference>
<dbReference type="Reactome" id="R-HSA-168927">
    <property type="pathway name" value="TICAM1, RIP1-mediated IKK complex recruitment"/>
</dbReference>
<dbReference type="Reactome" id="R-HSA-5213460">
    <property type="pathway name" value="RIPK1-mediated regulated necrosis"/>
</dbReference>
<dbReference type="Reactome" id="R-HSA-5357786">
    <property type="pathway name" value="TNFR1-induced proapoptotic signaling"/>
</dbReference>
<dbReference type="Reactome" id="R-HSA-5357905">
    <property type="pathway name" value="Regulation of TNFR1 signaling"/>
</dbReference>
<dbReference type="Reactome" id="R-HSA-5357956">
    <property type="pathway name" value="TNFR1-induced NF-kappa-B signaling pathway"/>
</dbReference>
<dbReference type="Reactome" id="R-HSA-5668541">
    <property type="pathway name" value="TNFR2 non-canonical NF-kB pathway"/>
</dbReference>
<dbReference type="Reactome" id="R-HSA-5675482">
    <property type="pathway name" value="Regulation of necroptotic cell death"/>
</dbReference>
<dbReference type="Reactome" id="R-HSA-5676594">
    <property type="pathway name" value="TNF receptor superfamily (TNFSF) members mediating non-canonical NF-kB pathway"/>
</dbReference>
<dbReference type="Reactome" id="R-HSA-5689880">
    <property type="pathway name" value="Ub-specific processing proteases"/>
</dbReference>
<dbReference type="Reactome" id="R-HSA-937041">
    <property type="pathway name" value="IKK complex recruitment mediated by RIP1"/>
</dbReference>
<dbReference type="SignaLink" id="Q13489"/>
<dbReference type="SIGNOR" id="Q13489"/>
<dbReference type="BioGRID-ORCS" id="330">
    <property type="hits" value="18 hits in 1192 CRISPR screens"/>
</dbReference>
<dbReference type="ChiTaRS" id="BIRC3">
    <property type="organism name" value="human"/>
</dbReference>
<dbReference type="EvolutionaryTrace" id="Q13489"/>
<dbReference type="GeneWiki" id="Baculoviral_IAP_repeat-containing_protein_3"/>
<dbReference type="GenomeRNAi" id="330"/>
<dbReference type="Pharos" id="Q13489">
    <property type="development level" value="Tchem"/>
</dbReference>
<dbReference type="PRO" id="PR:Q13489"/>
<dbReference type="Proteomes" id="UP000005640">
    <property type="component" value="Chromosome 11"/>
</dbReference>
<dbReference type="RNAct" id="Q13489">
    <property type="molecule type" value="protein"/>
</dbReference>
<dbReference type="Bgee" id="ENSG00000023445">
    <property type="expression patterns" value="Expressed in vermiform appendix and 154 other cell types or tissues"/>
</dbReference>
<dbReference type="ExpressionAtlas" id="Q13489">
    <property type="expression patterns" value="baseline and differential"/>
</dbReference>
<dbReference type="GO" id="GO:0005737">
    <property type="term" value="C:cytoplasm"/>
    <property type="evidence" value="ECO:0000314"/>
    <property type="project" value="UniProtKB"/>
</dbReference>
<dbReference type="GO" id="GO:0005829">
    <property type="term" value="C:cytosol"/>
    <property type="evidence" value="ECO:0000314"/>
    <property type="project" value="HPA"/>
</dbReference>
<dbReference type="GO" id="GO:0005654">
    <property type="term" value="C:nucleoplasm"/>
    <property type="evidence" value="ECO:0000314"/>
    <property type="project" value="HPA"/>
</dbReference>
<dbReference type="GO" id="GO:0005634">
    <property type="term" value="C:nucleus"/>
    <property type="evidence" value="ECO:0000314"/>
    <property type="project" value="UniProtKB"/>
</dbReference>
<dbReference type="GO" id="GO:0032991">
    <property type="term" value="C:protein-containing complex"/>
    <property type="evidence" value="ECO:0007669"/>
    <property type="project" value="Ensembl"/>
</dbReference>
<dbReference type="GO" id="GO:0043027">
    <property type="term" value="F:cysteine-type endopeptidase inhibitor activity involved in apoptotic process"/>
    <property type="evidence" value="ECO:0000318"/>
    <property type="project" value="GO_Central"/>
</dbReference>
<dbReference type="GO" id="GO:0044877">
    <property type="term" value="F:protein-containing complex binding"/>
    <property type="evidence" value="ECO:0007669"/>
    <property type="project" value="Ensembl"/>
</dbReference>
<dbReference type="GO" id="GO:0016740">
    <property type="term" value="F:transferase activity"/>
    <property type="evidence" value="ECO:0000269"/>
    <property type="project" value="Reactome"/>
</dbReference>
<dbReference type="GO" id="GO:0061630">
    <property type="term" value="F:ubiquitin protein ligase activity"/>
    <property type="evidence" value="ECO:0000318"/>
    <property type="project" value="GO_Central"/>
</dbReference>
<dbReference type="GO" id="GO:0004842">
    <property type="term" value="F:ubiquitin-protein transferase activity"/>
    <property type="evidence" value="ECO:0000314"/>
    <property type="project" value="UniProtKB"/>
</dbReference>
<dbReference type="GO" id="GO:0008270">
    <property type="term" value="F:zinc ion binding"/>
    <property type="evidence" value="ECO:0007669"/>
    <property type="project" value="UniProtKB-KW"/>
</dbReference>
<dbReference type="GO" id="GO:0006915">
    <property type="term" value="P:apoptotic process"/>
    <property type="evidence" value="ECO:0007669"/>
    <property type="project" value="UniProtKB-KW"/>
</dbReference>
<dbReference type="GO" id="GO:0007249">
    <property type="term" value="P:canonical NF-kappaB signal transduction"/>
    <property type="evidence" value="ECO:0000304"/>
    <property type="project" value="Reactome"/>
</dbReference>
<dbReference type="GO" id="GO:0007166">
    <property type="term" value="P:cell surface receptor signaling pathway"/>
    <property type="evidence" value="ECO:0000304"/>
    <property type="project" value="ProtInc"/>
</dbReference>
<dbReference type="GO" id="GO:0043066">
    <property type="term" value="P:negative regulation of apoptotic process"/>
    <property type="evidence" value="ECO:0000318"/>
    <property type="project" value="GO_Central"/>
</dbReference>
<dbReference type="GO" id="GO:0060546">
    <property type="term" value="P:negative regulation of necroptotic process"/>
    <property type="evidence" value="ECO:0000318"/>
    <property type="project" value="GO_Central"/>
</dbReference>
<dbReference type="GO" id="GO:0038061">
    <property type="term" value="P:non-canonical NF-kappaB signal transduction"/>
    <property type="evidence" value="ECO:0000304"/>
    <property type="project" value="UniProtKB"/>
</dbReference>
<dbReference type="GO" id="GO:0043123">
    <property type="term" value="P:positive regulation of canonical NF-kappaB signal transduction"/>
    <property type="evidence" value="ECO:0000304"/>
    <property type="project" value="UniProtKB"/>
</dbReference>
<dbReference type="GO" id="GO:0031398">
    <property type="term" value="P:positive regulation of protein ubiquitination"/>
    <property type="evidence" value="ECO:0000314"/>
    <property type="project" value="UniProtKB"/>
</dbReference>
<dbReference type="GO" id="GO:0042981">
    <property type="term" value="P:regulation of apoptotic process"/>
    <property type="evidence" value="ECO:0000315"/>
    <property type="project" value="UniProtKB"/>
</dbReference>
<dbReference type="GO" id="GO:0051726">
    <property type="term" value="P:regulation of cell cycle"/>
    <property type="evidence" value="ECO:0000318"/>
    <property type="project" value="GO_Central"/>
</dbReference>
<dbReference type="GO" id="GO:0050727">
    <property type="term" value="P:regulation of inflammatory response"/>
    <property type="evidence" value="ECO:0000304"/>
    <property type="project" value="UniProtKB"/>
</dbReference>
<dbReference type="GO" id="GO:0045088">
    <property type="term" value="P:regulation of innate immune response"/>
    <property type="evidence" value="ECO:0000304"/>
    <property type="project" value="UniProtKB"/>
</dbReference>
<dbReference type="GO" id="GO:0060544">
    <property type="term" value="P:regulation of necroptotic process"/>
    <property type="evidence" value="ECO:0000315"/>
    <property type="project" value="UniProtKB"/>
</dbReference>
<dbReference type="GO" id="GO:0070424">
    <property type="term" value="P:regulation of nucleotide-binding domain, leucine rich repeat containing receptor signaling pathway"/>
    <property type="evidence" value="ECO:0000304"/>
    <property type="project" value="UniProtKB"/>
</dbReference>
<dbReference type="GO" id="GO:0039535">
    <property type="term" value="P:regulation of RIG-I signaling pathway"/>
    <property type="evidence" value="ECO:0000304"/>
    <property type="project" value="UniProtKB"/>
</dbReference>
<dbReference type="GO" id="GO:0034121">
    <property type="term" value="P:regulation of toll-like receptor signaling pathway"/>
    <property type="evidence" value="ECO:0000304"/>
    <property type="project" value="UniProtKB"/>
</dbReference>
<dbReference type="GO" id="GO:0007283">
    <property type="term" value="P:spermatogenesis"/>
    <property type="evidence" value="ECO:0007669"/>
    <property type="project" value="Ensembl"/>
</dbReference>
<dbReference type="GO" id="GO:0033209">
    <property type="term" value="P:tumor necrosis factor-mediated signaling pathway"/>
    <property type="evidence" value="ECO:0000304"/>
    <property type="project" value="Reactome"/>
</dbReference>
<dbReference type="CDD" id="cd00022">
    <property type="entry name" value="BIR"/>
    <property type="match status" value="3"/>
</dbReference>
<dbReference type="CDD" id="cd08329">
    <property type="entry name" value="CARD_BIRC2_BIRC3"/>
    <property type="match status" value="1"/>
</dbReference>
<dbReference type="CDD" id="cd16713">
    <property type="entry name" value="RING-HC_BIRC2_3_7"/>
    <property type="match status" value="1"/>
</dbReference>
<dbReference type="FunFam" id="1.10.1170.10:FF:000005">
    <property type="entry name" value="Baculoviral IAP repeat containing 2"/>
    <property type="match status" value="1"/>
</dbReference>
<dbReference type="FunFam" id="1.10.1170.10:FF:000006">
    <property type="entry name" value="Baculoviral IAP repeat containing 2"/>
    <property type="match status" value="1"/>
</dbReference>
<dbReference type="FunFam" id="1.10.1170.10:FF:000010">
    <property type="entry name" value="Baculoviral IAP repeat containing 2"/>
    <property type="match status" value="1"/>
</dbReference>
<dbReference type="FunFam" id="3.30.40.10:FF:000184">
    <property type="entry name" value="Baculoviral IAP repeat containing 2"/>
    <property type="match status" value="1"/>
</dbReference>
<dbReference type="FunFam" id="1.10.1170.10:FF:000002">
    <property type="entry name" value="Baculoviral IAP repeat containing 7"/>
    <property type="match status" value="1"/>
</dbReference>
<dbReference type="FunFam" id="1.10.533.10:FF:000012">
    <property type="entry name" value="baculoviral IAP repeat-containing protein 2"/>
    <property type="match status" value="1"/>
</dbReference>
<dbReference type="FunFam" id="1.10.8.10:FF:000035">
    <property type="entry name" value="baculoviral IAP repeat-containing protein 2"/>
    <property type="match status" value="1"/>
</dbReference>
<dbReference type="Gene3D" id="1.10.533.10">
    <property type="entry name" value="Death Domain, Fas"/>
    <property type="match status" value="1"/>
</dbReference>
<dbReference type="Gene3D" id="1.10.8.10">
    <property type="entry name" value="DNA helicase RuvA subunit, C-terminal domain"/>
    <property type="match status" value="1"/>
</dbReference>
<dbReference type="Gene3D" id="1.10.1170.10">
    <property type="entry name" value="Inhibitor Of Apoptosis Protein (2mihbC-IAP-1), Chain A"/>
    <property type="match status" value="3"/>
</dbReference>
<dbReference type="InterPro" id="IPR001370">
    <property type="entry name" value="BIR_rpt"/>
</dbReference>
<dbReference type="InterPro" id="IPR048875">
    <property type="entry name" value="BIRC2-3-like_UBA"/>
</dbReference>
<dbReference type="InterPro" id="IPR001315">
    <property type="entry name" value="CARD"/>
</dbReference>
<dbReference type="InterPro" id="IPR011029">
    <property type="entry name" value="DEATH-like_dom_sf"/>
</dbReference>
<dbReference type="InterPro" id="IPR050784">
    <property type="entry name" value="IAP"/>
</dbReference>
<dbReference type="InterPro" id="IPR001841">
    <property type="entry name" value="Znf_RING"/>
</dbReference>
<dbReference type="PANTHER" id="PTHR10044:SF178">
    <property type="entry name" value="BACULOVIRAL IAP REPEAT-CONTAINING PROTEIN 3"/>
    <property type="match status" value="1"/>
</dbReference>
<dbReference type="PANTHER" id="PTHR10044">
    <property type="entry name" value="INHIBITOR OF APOPTOSIS"/>
    <property type="match status" value="1"/>
</dbReference>
<dbReference type="Pfam" id="PF00653">
    <property type="entry name" value="BIR"/>
    <property type="match status" value="3"/>
</dbReference>
<dbReference type="Pfam" id="PF00619">
    <property type="entry name" value="CARD"/>
    <property type="match status" value="1"/>
</dbReference>
<dbReference type="Pfam" id="PF21290">
    <property type="entry name" value="UBA_BIRC2-3"/>
    <property type="match status" value="1"/>
</dbReference>
<dbReference type="Pfam" id="PF13920">
    <property type="entry name" value="zf-C3HC4_3"/>
    <property type="match status" value="1"/>
</dbReference>
<dbReference type="SMART" id="SM00238">
    <property type="entry name" value="BIR"/>
    <property type="match status" value="3"/>
</dbReference>
<dbReference type="SMART" id="SM00114">
    <property type="entry name" value="CARD"/>
    <property type="match status" value="1"/>
</dbReference>
<dbReference type="SMART" id="SM00184">
    <property type="entry name" value="RING"/>
    <property type="match status" value="1"/>
</dbReference>
<dbReference type="SUPFAM" id="SSF47986">
    <property type="entry name" value="DEATH domain"/>
    <property type="match status" value="1"/>
</dbReference>
<dbReference type="SUPFAM" id="SSF57924">
    <property type="entry name" value="Inhibitor of apoptosis (IAP) repeat"/>
    <property type="match status" value="3"/>
</dbReference>
<dbReference type="PROSITE" id="PS01282">
    <property type="entry name" value="BIR_REPEAT_1"/>
    <property type="match status" value="3"/>
</dbReference>
<dbReference type="PROSITE" id="PS50143">
    <property type="entry name" value="BIR_REPEAT_2"/>
    <property type="match status" value="3"/>
</dbReference>
<dbReference type="PROSITE" id="PS50209">
    <property type="entry name" value="CARD"/>
    <property type="match status" value="1"/>
</dbReference>
<dbReference type="PROSITE" id="PS50089">
    <property type="entry name" value="ZF_RING_2"/>
    <property type="match status" value="1"/>
</dbReference>
<comment type="function">
    <text evidence="6 7">Multi-functional protein which regulates not only caspases and apoptosis, but also modulates inflammatory signaling and immunity, mitogenic kinase signaling and cell proliferation, as well as cell invasion and metastasis. Acts as an E3 ubiquitin-protein ligase regulating NF-kappa-B signaling and regulates both canonical and non-canonical NF-kappa-B signaling by acting in opposite directions: acts as a positive regulator of the canonical pathway and suppresses constitutive activation of non-canonical NF-kappa-B signaling. The target proteins for its E3 ubiquitin-protein ligase activity include: RIPK1, RIPK2, RIPK3, RIPK4, CASP3, CASP7, CASP8, IKBKE, TRAF1, and BCL10. Acts as an important regulator of innate immune signaling via regulation of Toll-like receptors (TLRs), Nodlike receptors (NLRs) and RIG-I like receptors (RLRs), collectively referred to as pattern recognition receptors (PRRs). Protects cells from spontaneous formation of the ripoptosome, a large multi-protein complex that has the capability to kill cancer cells in a caspase-dependent and caspase-independent manner. Suppresses ripoptosome formation by ubiquitinating RIPK1 and CASP8.</text>
</comment>
<comment type="catalytic activity">
    <reaction evidence="6 7">
        <text>S-ubiquitinyl-[E2 ubiquitin-conjugating enzyme]-L-cysteine + [acceptor protein]-L-lysine = [E2 ubiquitin-conjugating enzyme]-L-cysteine + N(6)-ubiquitinyl-[acceptor protein]-L-lysine.</text>
        <dbReference type="EC" id="2.3.2.27"/>
    </reaction>
</comment>
<comment type="activity regulation">
    <text evidence="5">USP19 regulates the stability of BIRC3/c-IAP2 by preventing its ubiquitination.</text>
</comment>
<comment type="subunit">
    <text evidence="5 6">Interacts with PRSS25; interaction inhibits apoptotic suppressor activity. The BIR motifs region interacts with TNF receptor associated factors 1 and 2 (TRAF1 and TRAF2) to form a heteromeric complex, which is then recruited to the tumor necrosis factor receptor 2 (TNFR2). Interaction with TRAF2 is required for ubiquitination of IKBKE, degradation of NFKBIA and activation of NF-kappa-B. Interacts with RIP1, RIP2, RIP3, RIP4 and USP19.</text>
</comment>
<comment type="interaction">
    <interactant intactId="EBI-517709">
        <id>Q13489</id>
    </interactant>
    <interactant intactId="EBI-358507">
        <id>Q13546</id>
        <label>RIPK1</label>
    </interactant>
    <organismsDiffer>false</organismsDiffer>
    <experiments>3</experiments>
</comment>
<comment type="interaction">
    <interactant intactId="EBI-517709">
        <id>Q13489</id>
    </interactant>
    <interactant intactId="EBI-358522">
        <id>O43353</id>
        <label>RIPK2</label>
    </interactant>
    <organismsDiffer>false</organismsDiffer>
    <experiments>3</experiments>
</comment>
<comment type="interaction">
    <interactant intactId="EBI-517709">
        <id>Q13489</id>
    </interactant>
    <interactant intactId="EBI-298250">
        <id>Q9Y572</id>
        <label>RIPK3</label>
    </interactant>
    <organismsDiffer>false</organismsDiffer>
    <experiments>3</experiments>
</comment>
<comment type="interaction">
    <interactant intactId="EBI-517709">
        <id>Q13489</id>
    </interactant>
    <interactant intactId="EBI-4422308">
        <id>P57078</id>
        <label>RIPK4</label>
    </interactant>
    <organismsDiffer>false</organismsDiffer>
    <experiments>3</experiments>
</comment>
<comment type="interaction">
    <interactant intactId="EBI-517709">
        <id>Q13489</id>
    </interactant>
    <interactant intactId="EBI-355744">
        <id>Q12933</id>
        <label>TRAF2</label>
    </interactant>
    <organismsDiffer>false</organismsDiffer>
    <experiments>8</experiments>
</comment>
<comment type="interaction">
    <interactant intactId="EBI-517709">
        <id>Q13489</id>
    </interactant>
    <interactant intactId="EBI-347677">
        <id>P62837</id>
        <label>UBE2D2</label>
    </interactant>
    <organismsDiffer>false</organismsDiffer>
    <experiments>2</experiments>
</comment>
<comment type="interaction">
    <interactant intactId="EBI-517709">
        <id>Q13489</id>
    </interactant>
    <interactant intactId="EBI-1052908">
        <id>P61088</id>
        <label>UBE2N</label>
    </interactant>
    <organismsDiffer>false</organismsDiffer>
    <experiments>2</experiments>
</comment>
<comment type="subcellular location">
    <subcellularLocation>
        <location evidence="4">Cytoplasm</location>
    </subcellularLocation>
    <subcellularLocation>
        <location evidence="4">Nucleus</location>
    </subcellularLocation>
</comment>
<comment type="tissue specificity">
    <text>Highly expressed in fetal lung, and kidney. In the adult, expression is mainly seen in lymphoid tissues, including spleen, thymus and peripheral blood lymphocytes.</text>
</comment>
<comment type="PTM">
    <text>Auto-ubiquitinated and degraded by the proteasome in apoptotic cells.</text>
</comment>
<comment type="disease">
    <text>A chromosomal aberration involving BIRC3 is recurrent in low-grade mucosa-associated lymphoid tissue (MALT lymphoma). Translocation t(11;18)(q21;q21) with MALT1. This translocation is found in approximately 50% of cytogenetically abnormal low-grade MALT lymphoma.</text>
</comment>
<comment type="similarity">
    <text evidence="10">Belongs to the IAP family.</text>
</comment>
<comment type="online information" name="Atlas of Genetics and Cytogenetics in Oncology and Haematology">
    <link uri="https://atlasgeneticsoncology.org/gene/239/BIRC3"/>
</comment>